<feature type="signal peptide" evidence="1">
    <location>
        <begin position="1"/>
        <end position="23"/>
    </location>
</feature>
<feature type="chain" id="PRO_0000259446" description="Probable polygalacturonase At3g15720">
    <location>
        <begin position="24"/>
        <end position="456"/>
    </location>
</feature>
<feature type="repeat" description="PbH1 1">
    <location>
        <begin position="169"/>
        <end position="195"/>
    </location>
</feature>
<feature type="repeat" description="PbH1 2">
    <location>
        <begin position="196"/>
        <end position="217"/>
    </location>
</feature>
<feature type="repeat" description="PbH1 3">
    <location>
        <begin position="219"/>
        <end position="239"/>
    </location>
</feature>
<feature type="repeat" description="PbH1 4">
    <location>
        <begin position="249"/>
        <end position="270"/>
    </location>
</feature>
<feature type="repeat" description="PbH1 5">
    <location>
        <begin position="278"/>
        <end position="299"/>
    </location>
</feature>
<feature type="repeat" description="PbH1 6">
    <location>
        <begin position="314"/>
        <end position="341"/>
    </location>
</feature>
<feature type="active site" description="Proton donor" evidence="2">
    <location>
        <position position="210"/>
    </location>
</feature>
<feature type="active site" evidence="2">
    <location>
        <position position="233"/>
    </location>
</feature>
<reference key="1">
    <citation type="journal article" date="2000" name="DNA Res.">
        <title>Structural analysis of Arabidopsis thaliana chromosome 3. I. Sequence features of the regions of 4,504,864 bp covered by sixty P1 and TAC clones.</title>
        <authorList>
            <person name="Sato S."/>
            <person name="Nakamura Y."/>
            <person name="Kaneko T."/>
            <person name="Katoh T."/>
            <person name="Asamizu E."/>
            <person name="Tabata S."/>
        </authorList>
    </citation>
    <scope>NUCLEOTIDE SEQUENCE [LARGE SCALE GENOMIC DNA]</scope>
    <source>
        <strain>cv. Columbia</strain>
    </source>
</reference>
<reference key="2">
    <citation type="journal article" date="2017" name="Plant J.">
        <title>Araport11: a complete reannotation of the Arabidopsis thaliana reference genome.</title>
        <authorList>
            <person name="Cheng C.Y."/>
            <person name="Krishnakumar V."/>
            <person name="Chan A.P."/>
            <person name="Thibaud-Nissen F."/>
            <person name="Schobel S."/>
            <person name="Town C.D."/>
        </authorList>
    </citation>
    <scope>GENOME REANNOTATION</scope>
    <source>
        <strain>cv. Columbia</strain>
    </source>
</reference>
<accession>Q9LW07</accession>
<name>PGLR3_ARATH</name>
<organism>
    <name type="scientific">Arabidopsis thaliana</name>
    <name type="common">Mouse-ear cress</name>
    <dbReference type="NCBI Taxonomy" id="3702"/>
    <lineage>
        <taxon>Eukaryota</taxon>
        <taxon>Viridiplantae</taxon>
        <taxon>Streptophyta</taxon>
        <taxon>Embryophyta</taxon>
        <taxon>Tracheophyta</taxon>
        <taxon>Spermatophyta</taxon>
        <taxon>Magnoliopsida</taxon>
        <taxon>eudicotyledons</taxon>
        <taxon>Gunneridae</taxon>
        <taxon>Pentapetalae</taxon>
        <taxon>rosids</taxon>
        <taxon>malvids</taxon>
        <taxon>Brassicales</taxon>
        <taxon>Brassicaceae</taxon>
        <taxon>Camelineae</taxon>
        <taxon>Arabidopsis</taxon>
    </lineage>
</organism>
<gene>
    <name type="ordered locus">At3g15720</name>
    <name type="ORF">MSJ11.12</name>
</gene>
<dbReference type="EC" id="3.2.1.15"/>
<dbReference type="EMBL" id="AB017071">
    <property type="protein sequence ID" value="BAB02303.1"/>
    <property type="molecule type" value="Genomic_DNA"/>
</dbReference>
<dbReference type="EMBL" id="CP002686">
    <property type="protein sequence ID" value="AEE75718.1"/>
    <property type="molecule type" value="Genomic_DNA"/>
</dbReference>
<dbReference type="RefSeq" id="NP_566524.1">
    <molecule id="Q9LW07-1"/>
    <property type="nucleotide sequence ID" value="NM_112442.2"/>
</dbReference>
<dbReference type="SMR" id="Q9LW07"/>
<dbReference type="FunCoup" id="Q9LW07">
    <property type="interactions" value="132"/>
</dbReference>
<dbReference type="STRING" id="3702.Q9LW07"/>
<dbReference type="CAZy" id="GH28">
    <property type="family name" value="Glycoside Hydrolase Family 28"/>
</dbReference>
<dbReference type="PaxDb" id="3702-AT3G15720.1"/>
<dbReference type="ProteomicsDB" id="236151">
    <molecule id="Q9LW07-1"/>
</dbReference>
<dbReference type="EnsemblPlants" id="AT3G15720.1">
    <molecule id="Q9LW07-1"/>
    <property type="protein sequence ID" value="AT3G15720.1"/>
    <property type="gene ID" value="AT3G15720"/>
</dbReference>
<dbReference type="GeneID" id="820815"/>
<dbReference type="Gramene" id="AT3G15720.1">
    <molecule id="Q9LW07-1"/>
    <property type="protein sequence ID" value="AT3G15720.1"/>
    <property type="gene ID" value="AT3G15720"/>
</dbReference>
<dbReference type="KEGG" id="ath:AT3G15720"/>
<dbReference type="Araport" id="AT3G15720"/>
<dbReference type="TAIR" id="AT3G15720"/>
<dbReference type="eggNOG" id="ENOG502QST2">
    <property type="taxonomic scope" value="Eukaryota"/>
</dbReference>
<dbReference type="HOGENOM" id="CLU_016031_2_2_1"/>
<dbReference type="InParanoid" id="Q9LW07"/>
<dbReference type="PhylomeDB" id="Q9LW07"/>
<dbReference type="BioCyc" id="ARA:AT3G15720-MONOMER"/>
<dbReference type="PRO" id="PR:Q9LW07"/>
<dbReference type="Proteomes" id="UP000006548">
    <property type="component" value="Chromosome 3"/>
</dbReference>
<dbReference type="ExpressionAtlas" id="Q9LW07">
    <property type="expression patterns" value="baseline and differential"/>
</dbReference>
<dbReference type="GO" id="GO:0005576">
    <property type="term" value="C:extracellular region"/>
    <property type="evidence" value="ECO:0007669"/>
    <property type="project" value="UniProtKB-KW"/>
</dbReference>
<dbReference type="GO" id="GO:0009505">
    <property type="term" value="C:plant-type cell wall"/>
    <property type="evidence" value="ECO:0007005"/>
    <property type="project" value="TAIR"/>
</dbReference>
<dbReference type="GO" id="GO:0004650">
    <property type="term" value="F:polygalacturonase activity"/>
    <property type="evidence" value="ECO:0007669"/>
    <property type="project" value="UniProtKB-EC"/>
</dbReference>
<dbReference type="GO" id="GO:0005975">
    <property type="term" value="P:carbohydrate metabolic process"/>
    <property type="evidence" value="ECO:0007669"/>
    <property type="project" value="InterPro"/>
</dbReference>
<dbReference type="GO" id="GO:0071555">
    <property type="term" value="P:cell wall organization"/>
    <property type="evidence" value="ECO:0007669"/>
    <property type="project" value="UniProtKB-KW"/>
</dbReference>
<dbReference type="FunFam" id="2.160.20.10:FF:000056">
    <property type="entry name" value="Pectin lyase-like superfamily protein"/>
    <property type="match status" value="1"/>
</dbReference>
<dbReference type="Gene3D" id="2.160.20.10">
    <property type="entry name" value="Single-stranded right-handed beta-helix, Pectin lyase-like"/>
    <property type="match status" value="1"/>
</dbReference>
<dbReference type="InterPro" id="IPR000743">
    <property type="entry name" value="Glyco_hydro_28"/>
</dbReference>
<dbReference type="InterPro" id="IPR006626">
    <property type="entry name" value="PbH1"/>
</dbReference>
<dbReference type="InterPro" id="IPR012334">
    <property type="entry name" value="Pectin_lyas_fold"/>
</dbReference>
<dbReference type="InterPro" id="IPR011050">
    <property type="entry name" value="Pectin_lyase_fold/virulence"/>
</dbReference>
<dbReference type="PANTHER" id="PTHR31375">
    <property type="match status" value="1"/>
</dbReference>
<dbReference type="Pfam" id="PF00295">
    <property type="entry name" value="Glyco_hydro_28"/>
    <property type="match status" value="1"/>
</dbReference>
<dbReference type="SMART" id="SM00710">
    <property type="entry name" value="PbH1"/>
    <property type="match status" value="6"/>
</dbReference>
<dbReference type="SUPFAM" id="SSF51126">
    <property type="entry name" value="Pectin lyase-like"/>
    <property type="match status" value="1"/>
</dbReference>
<dbReference type="PROSITE" id="PS00502">
    <property type="entry name" value="POLYGALACTURONASE"/>
    <property type="match status" value="1"/>
</dbReference>
<comment type="catalytic activity">
    <reaction>
        <text>(1,4-alpha-D-galacturonosyl)n+m + H2O = (1,4-alpha-D-galacturonosyl)n + (1,4-alpha-D-galacturonosyl)m.</text>
        <dbReference type="EC" id="3.2.1.15"/>
    </reaction>
</comment>
<comment type="subcellular location">
    <subcellularLocation>
        <location>Secreted</location>
        <location>Cell wall</location>
    </subcellularLocation>
</comment>
<comment type="alternative products">
    <event type="alternative splicing"/>
    <isoform>
        <id>Q9LW07-1</id>
        <name>1</name>
        <sequence type="displayed"/>
    </isoform>
    <text>A number of isoforms are produced. According to EST sequences.</text>
</comment>
<comment type="similarity">
    <text evidence="3">Belongs to the glycosyl hydrolase 28 family.</text>
</comment>
<keyword id="KW-0025">Alternative splicing</keyword>
<keyword id="KW-0134">Cell wall</keyword>
<keyword id="KW-0961">Cell wall biogenesis/degradation</keyword>
<keyword id="KW-0326">Glycosidase</keyword>
<keyword id="KW-0378">Hydrolase</keyword>
<keyword id="KW-1185">Reference proteome</keyword>
<keyword id="KW-0677">Repeat</keyword>
<keyword id="KW-0964">Secreted</keyword>
<keyword id="KW-0732">Signal</keyword>
<evidence type="ECO:0000255" key="1"/>
<evidence type="ECO:0000255" key="2">
    <source>
        <dbReference type="PROSITE-ProRule" id="PRU10052"/>
    </source>
</evidence>
<evidence type="ECO:0000305" key="3"/>
<sequence length="456" mass="49300">MKKKTWFLNFSLFFLQIFTSSNALDVTQFGAVGDGVTDDSQAFLKAWEAVCSGTGDGQFVVPAGMTFMLQPLKFQGSCKSTPVFVQMLGKLVAPSKGNWKGDKDQWILFTDIEGLVIEGDGEINGQGSSWWEHKGSRPTALKFRSCNNLRLSGLTHLDSPMAHIHISECNYVTISSLRINAPESSPNTDGIDVGASSNVVIQDCIIATGDDCIAINSGTSNIHISGIDCGPGHGISIGSLGKDGETATVENVCVQNCNFRGTMNGARIKTWQGGSGYARMITFNGITLDNVENPIIIDQFYNGGDSDNAKDRKSSAVEVSKVVFSNFIGTSKSEYGVDFRCSERVPCTEIFLRDMKIETASSGSGQVAQGQCLNVRGASTIAVPGLECLELSTDMFSSAQLLEQTCMSAQSVQPRTTTQPMQDPIWVFQSRGKQLRVYNIAILVSFISLVTYILAR</sequence>
<proteinExistence type="inferred from homology"/>
<protein>
    <recommendedName>
        <fullName>Probable polygalacturonase At3g15720</fullName>
        <shortName>PG</shortName>
        <ecNumber>3.2.1.15</ecNumber>
    </recommendedName>
    <alternativeName>
        <fullName>Pectinase At3g15720</fullName>
    </alternativeName>
</protein>